<protein>
    <recommendedName>
        <fullName>Retinoblastoma-related protein 1</fullName>
        <shortName>Rb1</shortName>
        <shortName>ZmRBR1</shortName>
    </recommendedName>
</protein>
<comment type="function">
    <text>Regulator of biological processes that recruits a histone deacetylase to control gene transcription. May play a role in the entry into mitosis, negatively regulating the cell proliferation. Formation of stable complexes with geminiviridae replication-associated proteins may create a cellular environment which favors viral DNA replication.</text>
</comment>
<comment type="subunit">
    <text evidence="3 4 5">Interacts with RPD3I, RBAP1, the Arabidopsis cyclin CYCD3-1, the mastrevirus replication-associated protein A (RepA) and the begomovirus replication-associated protein (Rep).</text>
</comment>
<comment type="subcellular location">
    <subcellularLocation>
        <location evidence="5">Nucleus</location>
    </subcellularLocation>
</comment>
<comment type="tissue specificity">
    <text evidence="4 5">Ubiquitous.</text>
</comment>
<comment type="developmental stage">
    <text evidence="2">Expressed in 5 to 8 days after pollination endosperm and does not change significantly during later developmental stages.</text>
</comment>
<comment type="domain">
    <text>The C-terminal domain (743-867) is required for binding of RPD3I and RBAP1.</text>
</comment>
<comment type="similarity">
    <text evidence="6">Belongs to the retinoblastoma protein (RB) family.</text>
</comment>
<comment type="sequence caution" evidence="6">
    <conflict type="erroneous initiation">
        <sequence resource="EMBL-CDS" id="CAA67422"/>
    </conflict>
</comment>
<dbReference type="EMBL" id="AF250050">
    <property type="protein sequence ID" value="AAF97520.1"/>
    <property type="molecule type" value="mRNA"/>
</dbReference>
<dbReference type="EMBL" id="AF007793">
    <property type="protein sequence ID" value="AAB69649.1"/>
    <property type="molecule type" value="mRNA"/>
</dbReference>
<dbReference type="EMBL" id="X98923">
    <property type="protein sequence ID" value="CAA67422.1"/>
    <property type="status" value="ALT_INIT"/>
    <property type="molecule type" value="mRNA"/>
</dbReference>
<dbReference type="PIR" id="T01171">
    <property type="entry name" value="T01171"/>
</dbReference>
<dbReference type="RefSeq" id="NP_001104876.1">
    <property type="nucleotide sequence ID" value="NM_001111406.1"/>
</dbReference>
<dbReference type="RefSeq" id="XP_008668606.1">
    <property type="nucleotide sequence ID" value="XM_008670384.1"/>
</dbReference>
<dbReference type="SMR" id="Q9LKX9"/>
<dbReference type="ELM" id="Q9LKX9"/>
<dbReference type="FunCoup" id="Q9LKX9">
    <property type="interactions" value="1634"/>
</dbReference>
<dbReference type="STRING" id="4577.Q9LKX9"/>
<dbReference type="PaxDb" id="4577-GRMZM2G003043_P01"/>
<dbReference type="GeneID" id="541651"/>
<dbReference type="KEGG" id="zma:541651"/>
<dbReference type="MaizeGDB" id="273689"/>
<dbReference type="eggNOG" id="KOG1010">
    <property type="taxonomic scope" value="Eukaryota"/>
</dbReference>
<dbReference type="InParanoid" id="Q9LKX9"/>
<dbReference type="OrthoDB" id="844594at2759"/>
<dbReference type="Proteomes" id="UP000007305">
    <property type="component" value="Unplaced"/>
</dbReference>
<dbReference type="ExpressionAtlas" id="Q9LKX9">
    <property type="expression patterns" value="baseline and differential"/>
</dbReference>
<dbReference type="GO" id="GO:0000785">
    <property type="term" value="C:chromatin"/>
    <property type="evidence" value="ECO:0000318"/>
    <property type="project" value="GO_Central"/>
</dbReference>
<dbReference type="GO" id="GO:0005634">
    <property type="term" value="C:nucleus"/>
    <property type="evidence" value="ECO:0007669"/>
    <property type="project" value="UniProtKB-SubCell"/>
</dbReference>
<dbReference type="GO" id="GO:0005667">
    <property type="term" value="C:transcription regulator complex"/>
    <property type="evidence" value="ECO:0000318"/>
    <property type="project" value="GO_Central"/>
</dbReference>
<dbReference type="GO" id="GO:0000977">
    <property type="term" value="F:RNA polymerase II transcription regulatory region sequence-specific DNA binding"/>
    <property type="evidence" value="ECO:0000318"/>
    <property type="project" value="GO_Central"/>
</dbReference>
<dbReference type="GO" id="GO:0030154">
    <property type="term" value="P:cell differentiation"/>
    <property type="evidence" value="ECO:0000318"/>
    <property type="project" value="GO_Central"/>
</dbReference>
<dbReference type="GO" id="GO:2000134">
    <property type="term" value="P:negative regulation of G1/S transition of mitotic cell cycle"/>
    <property type="evidence" value="ECO:0000318"/>
    <property type="project" value="GO_Central"/>
</dbReference>
<dbReference type="GO" id="GO:0006357">
    <property type="term" value="P:regulation of transcription by RNA polymerase II"/>
    <property type="evidence" value="ECO:0007669"/>
    <property type="project" value="InterPro"/>
</dbReference>
<dbReference type="FunFam" id="1.10.472.10:FF:000030">
    <property type="entry name" value="Retinoblastoma-related protein 1"/>
    <property type="match status" value="1"/>
</dbReference>
<dbReference type="FunFam" id="1.10.472.10:FF:000075">
    <property type="entry name" value="Retinoblastoma-related protein 2"/>
    <property type="match status" value="1"/>
</dbReference>
<dbReference type="Gene3D" id="1.10.472.10">
    <property type="entry name" value="Cyclin-like"/>
    <property type="match status" value="2"/>
</dbReference>
<dbReference type="InterPro" id="IPR036915">
    <property type="entry name" value="Cyclin-like_sf"/>
</dbReference>
<dbReference type="InterPro" id="IPR002720">
    <property type="entry name" value="RB_A"/>
</dbReference>
<dbReference type="InterPro" id="IPR002719">
    <property type="entry name" value="RB_B"/>
</dbReference>
<dbReference type="InterPro" id="IPR028309">
    <property type="entry name" value="RB_fam"/>
</dbReference>
<dbReference type="InterPro" id="IPR024599">
    <property type="entry name" value="RB_N"/>
</dbReference>
<dbReference type="PANTHER" id="PTHR13742">
    <property type="entry name" value="RETINOBLASTOMA-ASSOCIATED PROTEIN RB -RELATED"/>
    <property type="match status" value="1"/>
</dbReference>
<dbReference type="PANTHER" id="PTHR13742:SF22">
    <property type="entry name" value="RETINOBLASTOMA-RELATED PROTEIN 2"/>
    <property type="match status" value="1"/>
</dbReference>
<dbReference type="Pfam" id="PF11934">
    <property type="entry name" value="DUF3452"/>
    <property type="match status" value="1"/>
</dbReference>
<dbReference type="Pfam" id="PF01858">
    <property type="entry name" value="RB_A"/>
    <property type="match status" value="1"/>
</dbReference>
<dbReference type="Pfam" id="PF01857">
    <property type="entry name" value="RB_B"/>
    <property type="match status" value="1"/>
</dbReference>
<dbReference type="SMART" id="SM01367">
    <property type="entry name" value="DUF3452"/>
    <property type="match status" value="1"/>
</dbReference>
<dbReference type="SMART" id="SM01368">
    <property type="entry name" value="RB_A"/>
    <property type="match status" value="1"/>
</dbReference>
<dbReference type="SUPFAM" id="SSF47954">
    <property type="entry name" value="Cyclin-like"/>
    <property type="match status" value="2"/>
</dbReference>
<sequence>MSSLDPSPATSTQQQKQLESLVNLLTQGSRFYRKAYNELFSGVTTEQDPDSSTNIPEYMLFGWHLFLMLHLRSPELFKDLVSCIHGLVAVLAILLIHVPAKFRSFTIEGSSHLIKQTEKGVDLIASLCHNYHTSEERLKEMLHKSHNAIEDIFHMKALSASECKPENLDKIDTDDLMYFKGLIDMECFQSNLEKMEKLCNSNSCKGELDFKSILINNDYIPYDENSTGDSTNLGHSKCAFETLASPTKTIKNMLTVPSSPLSPATGGSVKIVQMTPVTSAMTTAKWLREVISSLPDKPSSKLQQFLSSCDRDLTNAVTERVSIVLEAIFPTKSSANRGVSLGLNCANAFDIPWAEARKVEASKLYYRVLEAICRAELQNSNVNNLTPLLSNERFHRCLIACSADLVLATHKTVIMMFPAVLESTGLTAFDLSKIIENFVRHEETLPRELKRHLNSLEEQLLESMAWEKGSSLYNSLIVARPSVASEINRLGLLAEPMPSLDDLVSRQNVRIEGLPATPSKKRAAGPDDNADPRSPKRSCNESRNTVVERNLQTPPPKQSHMVSTSLKAKCHPLQSTFASPTVCNPVGGNEKCADVTIHIFFSKILKLAAIRIRNLCERVQCVEQTERVYNVFKQILEQQTTLFFNRHIDQLILCCLYGVAKVCQLELTFREILNNYKREAQCKPEVFSSIYIGSTNRNGVLVSRHVGIITFYNEVFVPAAKPFLVSLISSGTHPEDKKNASGQIPGSPKPSPFPNLPDMSPKKVSASHNVYVSPLRQTKLDLLLSPSSRSFYACIGEGTHAYQSPSKDLAAINSRLNYNGRKVNSRLNFDMVSDSVVAGSLGQINGGSTSDPAAAFSPLSKKRETDT</sequence>
<organism>
    <name type="scientific">Zea mays</name>
    <name type="common">Maize</name>
    <dbReference type="NCBI Taxonomy" id="4577"/>
    <lineage>
        <taxon>Eukaryota</taxon>
        <taxon>Viridiplantae</taxon>
        <taxon>Streptophyta</taxon>
        <taxon>Embryophyta</taxon>
        <taxon>Tracheophyta</taxon>
        <taxon>Spermatophyta</taxon>
        <taxon>Magnoliopsida</taxon>
        <taxon>Liliopsida</taxon>
        <taxon>Poales</taxon>
        <taxon>Poaceae</taxon>
        <taxon>PACMAD clade</taxon>
        <taxon>Panicoideae</taxon>
        <taxon>Andropogonodae</taxon>
        <taxon>Andropogoneae</taxon>
        <taxon>Tripsacinae</taxon>
        <taxon>Zea</taxon>
    </lineage>
</organism>
<name>RBR1_MAIZE</name>
<reference key="1">
    <citation type="journal article" date="1997" name="Mol. Cell. Biol.">
        <title>RRB1 and RRB2 encode maize retinoblastoma-related proteins that interact with a plant D-type cyclin and geminivirus replication protein.</title>
        <authorList>
            <person name="Ach R.A."/>
            <person name="Durfee T."/>
            <person name="Miller A.B."/>
            <person name="Taranto P."/>
            <person name="Hanley-Bowdoin L."/>
            <person name="Zambryski P.C."/>
            <person name="Gruissem W."/>
        </authorList>
    </citation>
    <scope>NUCLEOTIDE SEQUENCE [MRNA]</scope>
    <scope>MUTAGENESIS OF CYS-654</scope>
    <scope>TISSUE SPECIFICITY</scope>
    <scope>SUBCELLULAR LOCATION</scope>
    <scope>INTERACTION WITH TOMATO GOLDEN MOSAIC VIRUS REP AND ARABIDOPSIS CYCD3-1</scope>
    <source>
        <strain>cv. B73</strain>
    </source>
</reference>
<reference key="2">
    <citation type="journal article" date="2003" name="Plant Mol. Biol.">
        <title>A maize histone deacetylase and retinoblastoma-related protein physically interact and cooperate in repressing gene transcription.</title>
        <authorList>
            <person name="Rossi V."/>
            <person name="Locatelli S."/>
            <person name="Lanzanova C."/>
            <person name="Boniotti M.B."/>
            <person name="Varotto S."/>
            <person name="Pipal A."/>
            <person name="Goralik-Schramel M."/>
            <person name="Lusser A."/>
            <person name="Gatz C."/>
            <person name="Gutierrez C."/>
            <person name="Motto M."/>
        </authorList>
    </citation>
    <scope>NUCLEOTIDE SEQUENCE [MRNA]</scope>
    <scope>MUTAGENESIS OF CYS-654</scope>
    <scope>DEVELOPMENTAL STAGE</scope>
</reference>
<reference key="3">
    <citation type="journal article" date="1996" name="EMBO J.">
        <title>Plant cells contain a novel member of the retinoblastoma family of growth regulatory proteins.</title>
        <authorList>
            <person name="Xie Q."/>
            <person name="Sanz-Burgos A.P."/>
            <person name="Hannon G.J."/>
            <person name="Gutierrez C."/>
        </authorList>
    </citation>
    <scope>NUCLEOTIDE SEQUENCE [MRNA] OF 180-867</scope>
    <scope>TISSUE SPECIFICITY</scope>
    <scope>INTERACTION WITH WHEAT DWARF VIRUS REPA</scope>
</reference>
<reference key="4">
    <citation type="journal article" date="2004" name="Vet. Microbiol.">
        <title>Geminivirus DNA replication and cell cycle interactions.</title>
        <authorList>
            <person name="Gutierrez C."/>
            <person name="Ramirez-Parra E."/>
            <person name="Mar Castellano M."/>
            <person name="Sanz-Burgos A.P."/>
            <person name="Luque A."/>
            <person name="Missich R."/>
        </authorList>
    </citation>
    <scope>INTERACTION WITH WHEAT DWARF VIRUS REPA</scope>
</reference>
<reference key="5">
    <citation type="journal article" date="2007" name="J. Exp. Bot.">
        <title>Dicot and monocot plants differ in retinoblastoma-related protein subfamilies.</title>
        <authorList>
            <person name="Lendvai A."/>
            <person name="Pettko-Szandtner A."/>
            <person name="Csordas-Toth E."/>
            <person name="Miskolczi P."/>
            <person name="Horvath G.V."/>
            <person name="Gyoergyey J."/>
            <person name="Dudits D."/>
        </authorList>
    </citation>
    <scope>GENE FAMILY</scope>
    <scope>NOMENCLATURE</scope>
</reference>
<proteinExistence type="evidence at protein level"/>
<feature type="chain" id="PRO_0000335246" description="Retinoblastoma-related protein 1">
    <location>
        <begin position="1"/>
        <end position="867"/>
    </location>
</feature>
<feature type="region of interest" description="Pocket; binds RPD3I and RBAP1">
    <location>
        <begin position="275"/>
        <end position="722"/>
    </location>
</feature>
<feature type="region of interest" description="Domain A">
    <location>
        <begin position="275"/>
        <end position="476"/>
    </location>
</feature>
<feature type="region of interest" description="Spacer">
    <location>
        <begin position="477"/>
        <end position="594"/>
    </location>
</feature>
<feature type="region of interest" description="Disordered" evidence="1">
    <location>
        <begin position="512"/>
        <end position="563"/>
    </location>
</feature>
<feature type="region of interest" description="Domain B">
    <location>
        <begin position="595"/>
        <end position="722"/>
    </location>
</feature>
<feature type="region of interest" description="Disordered" evidence="1">
    <location>
        <begin position="734"/>
        <end position="762"/>
    </location>
</feature>
<feature type="region of interest" description="Disordered" evidence="1">
    <location>
        <begin position="843"/>
        <end position="867"/>
    </location>
</feature>
<feature type="compositionally biased region" description="Basic and acidic residues" evidence="1">
    <location>
        <begin position="530"/>
        <end position="540"/>
    </location>
</feature>
<feature type="compositionally biased region" description="Polar residues" evidence="1">
    <location>
        <begin position="541"/>
        <end position="552"/>
    </location>
</feature>
<feature type="mutagenesis site" description="Loss of interaction with RPD3I or CYCD3-1, but not with RBAP1." evidence="2 5">
    <original>C</original>
    <variation>F</variation>
    <location>
        <position position="654"/>
    </location>
</feature>
<feature type="sequence conflict" description="In Ref. 1; AAB69649." evidence="6" ref="1">
    <location>
        <position position="15"/>
    </location>
</feature>
<feature type="sequence conflict" description="In Ref. 2; AAF97520." evidence="6" ref="2">
    <original>C</original>
    <variation>Y</variation>
    <location>
        <position position="199"/>
    </location>
</feature>
<feature type="sequence conflict" description="In Ref. 2; AAF97520." evidence="6" ref="2">
    <original>I</original>
    <variation>V</variation>
    <location>
        <position position="220"/>
    </location>
</feature>
<feature type="sequence conflict" description="In Ref. 2; AAF97520." evidence="6" ref="2">
    <original>A</original>
    <variation>S</variation>
    <location>
        <position position="530"/>
    </location>
</feature>
<feature type="sequence conflict" description="In Ref. 2; AAF97520." evidence="6" ref="2">
    <original>S</original>
    <variation>F</variation>
    <location>
        <position position="542"/>
    </location>
</feature>
<feature type="sequence conflict" description="In Ref. 2; AAF97520." evidence="6" ref="2">
    <original>V</original>
    <variation>L</variation>
    <location>
        <position position="595"/>
    </location>
</feature>
<evidence type="ECO:0000256" key="1">
    <source>
        <dbReference type="SAM" id="MobiDB-lite"/>
    </source>
</evidence>
<evidence type="ECO:0000269" key="2">
    <source>
    </source>
</evidence>
<evidence type="ECO:0000269" key="3">
    <source>
    </source>
</evidence>
<evidence type="ECO:0000269" key="4">
    <source>
    </source>
</evidence>
<evidence type="ECO:0000269" key="5">
    <source>
    </source>
</evidence>
<evidence type="ECO:0000305" key="6"/>
<gene>
    <name type="primary">RBR1</name>
    <name type="synonym">RRB1</name>
</gene>
<accession>Q9LKX9</accession>
<accession>O22344</accession>
<accession>Q7DLV4</accession>
<keyword id="KW-0131">Cell cycle</keyword>
<keyword id="KW-0945">Host-virus interaction</keyword>
<keyword id="KW-0539">Nucleus</keyword>
<keyword id="KW-1185">Reference proteome</keyword>
<keyword id="KW-0678">Repressor</keyword>
<keyword id="KW-0804">Transcription</keyword>
<keyword id="KW-0805">Transcription regulation</keyword>